<keyword id="KW-0067">ATP-binding</keyword>
<keyword id="KW-0963">Cytoplasm</keyword>
<keyword id="KW-0210">Decarboxylase</keyword>
<keyword id="KW-0312">Gluconeogenesis</keyword>
<keyword id="KW-0456">Lyase</keyword>
<keyword id="KW-0464">Manganese</keyword>
<keyword id="KW-0479">Metal-binding</keyword>
<keyword id="KW-0547">Nucleotide-binding</keyword>
<keyword id="KW-1185">Reference proteome</keyword>
<protein>
    <recommendedName>
        <fullName evidence="1">Phosphoenolpyruvate carboxykinase (ATP)</fullName>
        <shortName evidence="1">PCK</shortName>
        <shortName evidence="1">PEP carboxykinase</shortName>
        <shortName evidence="1">PEPCK</shortName>
        <ecNumber evidence="1">4.1.1.49</ecNumber>
    </recommendedName>
</protein>
<organism>
    <name type="scientific">Staphylococcus aureus (strain NCTC 8325 / PS 47)</name>
    <dbReference type="NCBI Taxonomy" id="93061"/>
    <lineage>
        <taxon>Bacteria</taxon>
        <taxon>Bacillati</taxon>
        <taxon>Bacillota</taxon>
        <taxon>Bacilli</taxon>
        <taxon>Bacillales</taxon>
        <taxon>Staphylococcaceae</taxon>
        <taxon>Staphylococcus</taxon>
    </lineage>
</organism>
<reference key="1">
    <citation type="journal article" date="1996" name="J. Bacteriol.">
        <title>Identification and characterization of the pckA gene from Staphylococcus aureus.</title>
        <authorList>
            <person name="Scovill W.H."/>
            <person name="Schreier H.J."/>
            <person name="Bayles K.W."/>
        </authorList>
    </citation>
    <scope>NUCLEOTIDE SEQUENCE [GENOMIC DNA]</scope>
</reference>
<reference key="2">
    <citation type="book" date="2006" name="Gram positive pathogens, 2nd edition">
        <title>The Staphylococcus aureus NCTC 8325 genome.</title>
        <editorList>
            <person name="Fischetti V."/>
            <person name="Novick R."/>
            <person name="Ferretti J."/>
            <person name="Portnoy D."/>
            <person name="Rood J."/>
        </editorList>
        <authorList>
            <person name="Gillaspy A.F."/>
            <person name="Worrell V."/>
            <person name="Orvis J."/>
            <person name="Roe B.A."/>
            <person name="Dyer D.W."/>
            <person name="Iandolo J.J."/>
        </authorList>
    </citation>
    <scope>NUCLEOTIDE SEQUENCE [LARGE SCALE GENOMIC DNA]</scope>
    <source>
        <strain>NCTC 8325 / PS 47</strain>
    </source>
</reference>
<name>PCKA_STAA8</name>
<accession>Q2G1W2</accession>
<accession>P0A0B4</accession>
<accession>P51065</accession>
<feature type="chain" id="PRO_0000247944" description="Phosphoenolpyruvate carboxykinase (ATP)">
    <location>
        <begin position="1"/>
        <end position="530"/>
    </location>
</feature>
<feature type="binding site" evidence="1">
    <location>
        <position position="58"/>
    </location>
    <ligand>
        <name>substrate</name>
    </ligand>
</feature>
<feature type="binding site" evidence="1">
    <location>
        <position position="195"/>
    </location>
    <ligand>
        <name>substrate</name>
    </ligand>
</feature>
<feature type="binding site" evidence="1">
    <location>
        <position position="201"/>
    </location>
    <ligand>
        <name>ATP</name>
        <dbReference type="ChEBI" id="CHEBI:30616"/>
    </ligand>
</feature>
<feature type="binding site" evidence="1">
    <location>
        <position position="201"/>
    </location>
    <ligand>
        <name>Mn(2+)</name>
        <dbReference type="ChEBI" id="CHEBI:29035"/>
    </ligand>
</feature>
<feature type="binding site" evidence="1">
    <location>
        <position position="201"/>
    </location>
    <ligand>
        <name>substrate</name>
    </ligand>
</feature>
<feature type="binding site" evidence="1">
    <location>
        <position position="220"/>
    </location>
    <ligand>
        <name>ATP</name>
        <dbReference type="ChEBI" id="CHEBI:30616"/>
    </ligand>
</feature>
<feature type="binding site" evidence="1">
    <location>
        <position position="220"/>
    </location>
    <ligand>
        <name>Mn(2+)</name>
        <dbReference type="ChEBI" id="CHEBI:29035"/>
    </ligand>
</feature>
<feature type="binding site" evidence="1">
    <location>
        <begin position="236"/>
        <end position="244"/>
    </location>
    <ligand>
        <name>ATP</name>
        <dbReference type="ChEBI" id="CHEBI:30616"/>
    </ligand>
</feature>
<feature type="binding site" evidence="1">
    <location>
        <position position="257"/>
    </location>
    <ligand>
        <name>Mn(2+)</name>
        <dbReference type="ChEBI" id="CHEBI:29035"/>
    </ligand>
</feature>
<feature type="binding site" evidence="1">
    <location>
        <position position="285"/>
    </location>
    <ligand>
        <name>ATP</name>
        <dbReference type="ChEBI" id="CHEBI:30616"/>
    </ligand>
</feature>
<feature type="binding site" evidence="1">
    <location>
        <position position="321"/>
    </location>
    <ligand>
        <name>ATP</name>
        <dbReference type="ChEBI" id="CHEBI:30616"/>
    </ligand>
</feature>
<feature type="binding site" evidence="1">
    <location>
        <position position="321"/>
    </location>
    <ligand>
        <name>substrate</name>
    </ligand>
</feature>
<feature type="binding site" evidence="1">
    <location>
        <begin position="440"/>
        <end position="441"/>
    </location>
    <ligand>
        <name>ATP</name>
        <dbReference type="ChEBI" id="CHEBI:30616"/>
    </ligand>
</feature>
<feature type="binding site" evidence="1">
    <location>
        <position position="446"/>
    </location>
    <ligand>
        <name>ATP</name>
        <dbReference type="ChEBI" id="CHEBI:30616"/>
    </ligand>
</feature>
<gene>
    <name evidence="1" type="primary">pckA</name>
    <name type="ordered locus">SAOUHSC_01910</name>
</gene>
<evidence type="ECO:0000255" key="1">
    <source>
        <dbReference type="HAMAP-Rule" id="MF_00453"/>
    </source>
</evidence>
<comment type="function">
    <text evidence="1">Involved in the gluconeogenesis. Catalyzes the conversion of oxaloacetate (OAA) to phosphoenolpyruvate (PEP) through direct phosphoryl transfer between the nucleoside triphosphate and OAA.</text>
</comment>
<comment type="catalytic activity">
    <reaction evidence="1">
        <text>oxaloacetate + ATP = phosphoenolpyruvate + ADP + CO2</text>
        <dbReference type="Rhea" id="RHEA:18617"/>
        <dbReference type="ChEBI" id="CHEBI:16452"/>
        <dbReference type="ChEBI" id="CHEBI:16526"/>
        <dbReference type="ChEBI" id="CHEBI:30616"/>
        <dbReference type="ChEBI" id="CHEBI:58702"/>
        <dbReference type="ChEBI" id="CHEBI:456216"/>
        <dbReference type="EC" id="4.1.1.49"/>
    </reaction>
</comment>
<comment type="cofactor">
    <cofactor evidence="1">
        <name>Mn(2+)</name>
        <dbReference type="ChEBI" id="CHEBI:29035"/>
    </cofactor>
    <text evidence="1">Binds 1 Mn(2+) ion per subunit.</text>
</comment>
<comment type="pathway">
    <text evidence="1">Carbohydrate biosynthesis; gluconeogenesis.</text>
</comment>
<comment type="subcellular location">
    <subcellularLocation>
        <location evidence="1">Cytoplasm</location>
    </subcellularLocation>
</comment>
<comment type="similarity">
    <text evidence="1">Belongs to the phosphoenolpyruvate carboxykinase (ATP) family.</text>
</comment>
<dbReference type="EC" id="4.1.1.49" evidence="1"/>
<dbReference type="EMBL" id="L42943">
    <property type="protein sequence ID" value="AAB07805.1"/>
    <property type="molecule type" value="Genomic_DNA"/>
</dbReference>
<dbReference type="EMBL" id="CP000253">
    <property type="protein sequence ID" value="ABD30973.1"/>
    <property type="molecule type" value="Genomic_DNA"/>
</dbReference>
<dbReference type="RefSeq" id="WP_000109906.1">
    <property type="nucleotide sequence ID" value="NZ_LS483365.1"/>
</dbReference>
<dbReference type="RefSeq" id="YP_500411.1">
    <property type="nucleotide sequence ID" value="NC_007795.1"/>
</dbReference>
<dbReference type="SMR" id="Q2G1W2"/>
<dbReference type="STRING" id="93061.SAOUHSC_01910"/>
<dbReference type="PaxDb" id="1280-SAXN108_1819"/>
<dbReference type="GeneID" id="3921052"/>
<dbReference type="KEGG" id="sao:SAOUHSC_01910"/>
<dbReference type="PATRIC" id="fig|93061.5.peg.1739"/>
<dbReference type="eggNOG" id="COG1866">
    <property type="taxonomic scope" value="Bacteria"/>
</dbReference>
<dbReference type="HOGENOM" id="CLU_018247_0_1_9"/>
<dbReference type="OrthoDB" id="9806325at2"/>
<dbReference type="UniPathway" id="UPA00138"/>
<dbReference type="PRO" id="PR:Q2G1W2"/>
<dbReference type="Proteomes" id="UP000008816">
    <property type="component" value="Chromosome"/>
</dbReference>
<dbReference type="GO" id="GO:0005829">
    <property type="term" value="C:cytosol"/>
    <property type="evidence" value="ECO:0000318"/>
    <property type="project" value="GO_Central"/>
</dbReference>
<dbReference type="GO" id="GO:0005524">
    <property type="term" value="F:ATP binding"/>
    <property type="evidence" value="ECO:0007669"/>
    <property type="project" value="UniProtKB-UniRule"/>
</dbReference>
<dbReference type="GO" id="GO:0046872">
    <property type="term" value="F:metal ion binding"/>
    <property type="evidence" value="ECO:0007669"/>
    <property type="project" value="UniProtKB-KW"/>
</dbReference>
<dbReference type="GO" id="GO:0004612">
    <property type="term" value="F:phosphoenolpyruvate carboxykinase (ATP) activity"/>
    <property type="evidence" value="ECO:0000318"/>
    <property type="project" value="GO_Central"/>
</dbReference>
<dbReference type="GO" id="GO:0006094">
    <property type="term" value="P:gluconeogenesis"/>
    <property type="evidence" value="ECO:0000318"/>
    <property type="project" value="GO_Central"/>
</dbReference>
<dbReference type="CDD" id="cd00484">
    <property type="entry name" value="PEPCK_ATP"/>
    <property type="match status" value="1"/>
</dbReference>
<dbReference type="FunFam" id="2.170.8.10:FF:000001">
    <property type="entry name" value="Phosphoenolpyruvate carboxykinase (ATP)"/>
    <property type="match status" value="1"/>
</dbReference>
<dbReference type="FunFam" id="3.40.449.10:FF:000001">
    <property type="entry name" value="Phosphoenolpyruvate carboxykinase (ATP)"/>
    <property type="match status" value="1"/>
</dbReference>
<dbReference type="Gene3D" id="3.90.228.20">
    <property type="match status" value="1"/>
</dbReference>
<dbReference type="Gene3D" id="3.40.449.10">
    <property type="entry name" value="Phosphoenolpyruvate Carboxykinase, domain 1"/>
    <property type="match status" value="1"/>
</dbReference>
<dbReference type="Gene3D" id="2.170.8.10">
    <property type="entry name" value="Phosphoenolpyruvate Carboxykinase, domain 2"/>
    <property type="match status" value="1"/>
</dbReference>
<dbReference type="HAMAP" id="MF_00453">
    <property type="entry name" value="PEPCK_ATP"/>
    <property type="match status" value="1"/>
</dbReference>
<dbReference type="InterPro" id="IPR001272">
    <property type="entry name" value="PEP_carboxykinase_ATP"/>
</dbReference>
<dbReference type="InterPro" id="IPR013035">
    <property type="entry name" value="PEP_carboxykinase_C"/>
</dbReference>
<dbReference type="InterPro" id="IPR008210">
    <property type="entry name" value="PEP_carboxykinase_N"/>
</dbReference>
<dbReference type="InterPro" id="IPR015994">
    <property type="entry name" value="PEPCK_ATP_CS"/>
</dbReference>
<dbReference type="NCBIfam" id="TIGR00224">
    <property type="entry name" value="pckA"/>
    <property type="match status" value="1"/>
</dbReference>
<dbReference type="NCBIfam" id="NF006820">
    <property type="entry name" value="PRK09344.1-2"/>
    <property type="match status" value="1"/>
</dbReference>
<dbReference type="NCBIfam" id="NF006821">
    <property type="entry name" value="PRK09344.1-3"/>
    <property type="match status" value="1"/>
</dbReference>
<dbReference type="PANTHER" id="PTHR30031:SF0">
    <property type="entry name" value="PHOSPHOENOLPYRUVATE CARBOXYKINASE (ATP)"/>
    <property type="match status" value="1"/>
</dbReference>
<dbReference type="PANTHER" id="PTHR30031">
    <property type="entry name" value="PHOSPHOENOLPYRUVATE CARBOXYKINASE ATP"/>
    <property type="match status" value="1"/>
</dbReference>
<dbReference type="Pfam" id="PF01293">
    <property type="entry name" value="PEPCK_ATP"/>
    <property type="match status" value="1"/>
</dbReference>
<dbReference type="PIRSF" id="PIRSF006294">
    <property type="entry name" value="PEP_crbxkin"/>
    <property type="match status" value="1"/>
</dbReference>
<dbReference type="SUPFAM" id="SSF68923">
    <property type="entry name" value="PEP carboxykinase N-terminal domain"/>
    <property type="match status" value="1"/>
</dbReference>
<dbReference type="SUPFAM" id="SSF53795">
    <property type="entry name" value="PEP carboxykinase-like"/>
    <property type="match status" value="1"/>
</dbReference>
<dbReference type="PROSITE" id="PS00532">
    <property type="entry name" value="PEPCK_ATP"/>
    <property type="match status" value="1"/>
</dbReference>
<proteinExistence type="inferred from homology"/>
<sequence>MSVDTYTETTKIDKLLKKPTSHFQLSTTQLYNKILDNNEGVLTELGAVNASTGKYTGRSPKDKFFVSEPSYRDNIDWGEINQPIDEETFLKLYHKVLDYLDKKDELYVFKGYAGSDKDTMLKLTVINELAWHNLFAKNMFIRPESKEEATKIKPNFTIVSAPHFKADPEVDGTKSETFVIISFKHKVILIGGTEYAGEMKKGIFSVMNYLLPMQDIMSMHCSANVGEKGDVALFFGLSGTGKTTLSADPHRKLIGDDEHGWNKNGVFNIEGGCYAKAINLSKEKEPQIFDAIKYGAILENTVVAEDGSVDFEDNRYTENTRAAYPINHIDNIVVPSKAAHPNTIIFLTADAFGVIPPISKLNKDQAMYHFLSGFTSKLAGTERGVTEPEPSFSTCFGAPFFPLHPTVYADLLGELIDLHDVDVYLVNTGWTGGKYGVGRRISLHYTRQMVNQAISGKLKNAEYTKDSTFGLSIPVEIEDVPKTILNPINAWSDKEKYKAQAEDLIQRFEKNFEKFGEKVEHIAEKGSFNK</sequence>